<feature type="signal peptide" evidence="4">
    <location>
        <begin position="1"/>
        <end position="22"/>
    </location>
</feature>
<feature type="chain" id="PRO_0000022655" description="Neurosecretory protein VGF">
    <location>
        <begin position="23"/>
        <end position="615"/>
    </location>
</feature>
<feature type="peptide" id="PRO_0000403364" description="Neuroendocrine regulatory peptide-1">
    <location>
        <begin position="281"/>
        <end position="306"/>
    </location>
</feature>
<feature type="peptide" id="PRO_0000403365" description="Neuroendocrine regulatory peptide-2">
    <location>
        <begin position="310"/>
        <end position="347"/>
    </location>
</feature>
<feature type="peptide" id="PRO_0000446626" description="VGF-derived peptide TLQP-62">
    <location>
        <begin position="554"/>
        <end position="615"/>
    </location>
</feature>
<feature type="peptide" id="PRO_0000422072" description="Antimicrobial peptide VGF[554-577]">
    <location>
        <begin position="554"/>
        <end position="577"/>
    </location>
</feature>
<feature type="peptide" id="PRO_0000446627" description="VGF-derived peptide TLQP-21">
    <location>
        <begin position="554"/>
        <end position="574"/>
    </location>
</feature>
<feature type="region of interest" description="Disordered" evidence="5">
    <location>
        <begin position="22"/>
        <end position="201"/>
    </location>
</feature>
<feature type="region of interest" description="Disordered" evidence="5">
    <location>
        <begin position="218"/>
        <end position="257"/>
    </location>
</feature>
<feature type="region of interest" description="Disordered" evidence="5">
    <location>
        <begin position="342"/>
        <end position="600"/>
    </location>
</feature>
<feature type="compositionally biased region" description="Pro residues" evidence="5">
    <location>
        <begin position="25"/>
        <end position="35"/>
    </location>
</feature>
<feature type="compositionally biased region" description="Pro residues" evidence="5">
    <location>
        <begin position="129"/>
        <end position="141"/>
    </location>
</feature>
<feature type="compositionally biased region" description="Low complexity" evidence="5">
    <location>
        <begin position="179"/>
        <end position="194"/>
    </location>
</feature>
<feature type="compositionally biased region" description="Acidic residues" evidence="5">
    <location>
        <begin position="378"/>
        <end position="394"/>
    </location>
</feature>
<feature type="compositionally biased region" description="Basic and acidic residues" evidence="5">
    <location>
        <begin position="415"/>
        <end position="433"/>
    </location>
</feature>
<feature type="compositionally biased region" description="Acidic residues" evidence="5">
    <location>
        <begin position="434"/>
        <end position="448"/>
    </location>
</feature>
<feature type="compositionally biased region" description="Pro residues" evidence="5">
    <location>
        <begin position="487"/>
        <end position="497"/>
    </location>
</feature>
<feature type="compositionally biased region" description="Basic and acidic residues" evidence="5">
    <location>
        <begin position="577"/>
        <end position="599"/>
    </location>
</feature>
<feature type="modified residue" description="Pyrrolidone carboxylic acid" evidence="6">
    <location>
        <position position="310"/>
    </location>
</feature>
<feature type="modified residue" description="Phosphoserine; by FAM20C" evidence="8">
    <location>
        <position position="420"/>
    </location>
</feature>
<feature type="modified residue" description="Phosphothreonine; by FAM20C" evidence="8">
    <location>
        <position position="424"/>
    </location>
</feature>
<feature type="modified residue" description="Proline amide" evidence="7">
    <location>
        <position position="577"/>
    </location>
</feature>
<feature type="sequence conflict" description="In Ref. 1; CAA73210." evidence="10" ref="1">
    <original>PES</original>
    <variation>AGE</variation>
    <location>
        <begin position="129"/>
        <end position="131"/>
    </location>
</feature>
<feature type="sequence conflict" description="In Ref. 1; CAA73210." evidence="10" ref="1">
    <original>P</original>
    <variation>A</variation>
    <location>
        <position position="282"/>
    </location>
</feature>
<feature type="sequence conflict" description="In Ref. 1; CAA73210." evidence="10" ref="1">
    <original>E</original>
    <variation>EA</variation>
    <location>
        <position position="387"/>
    </location>
</feature>
<feature type="sequence conflict" description="In Ref. 1; CAA73210." evidence="10" ref="1">
    <original>E</original>
    <variation>D</variation>
    <location>
        <position position="393"/>
    </location>
</feature>
<feature type="sequence conflict" description="In Ref. 1; CAA73210." evidence="10" ref="1">
    <original>K</original>
    <variation>N</variation>
    <location>
        <position position="481"/>
    </location>
</feature>
<feature type="sequence conflict" description="In Ref. 1; CAA73210." evidence="10" ref="1">
    <original>N</original>
    <variation>K</variation>
    <location>
        <position position="485"/>
    </location>
</feature>
<feature type="sequence conflict" description="In Ref. 1; CAA73210." evidence="10" ref="1">
    <original>APAP</original>
    <variation>PPS</variation>
    <location>
        <begin position="512"/>
        <end position="515"/>
    </location>
</feature>
<feature type="sequence conflict" description="In Ref. 1; CAA73210." evidence="10" ref="1">
    <original>RA</original>
    <variation>HAQ</variation>
    <location>
        <begin position="585"/>
        <end position="586"/>
    </location>
</feature>
<feature type="helix" evidence="11">
    <location>
        <begin position="311"/>
        <end position="345"/>
    </location>
</feature>
<feature type="helix" evidence="12">
    <location>
        <begin position="587"/>
        <end position="613"/>
    </location>
</feature>
<keyword id="KW-0002">3D-structure</keyword>
<keyword id="KW-0027">Amidation</keyword>
<keyword id="KW-0044">Antibiotic</keyword>
<keyword id="KW-0929">Antimicrobial</keyword>
<keyword id="KW-0165">Cleavage on pair of basic residues</keyword>
<keyword id="KW-0968">Cytoplasmic vesicle</keyword>
<keyword id="KW-0903">Direct protein sequencing</keyword>
<keyword id="KW-0339">Growth factor</keyword>
<keyword id="KW-0597">Phosphoprotein</keyword>
<keyword id="KW-1267">Proteomics identification</keyword>
<keyword id="KW-0873">Pyrrolidone carboxylic acid</keyword>
<keyword id="KW-1185">Reference proteome</keyword>
<keyword id="KW-0964">Secreted</keyword>
<keyword id="KW-0732">Signal</keyword>
<evidence type="ECO:0000250" key="1"/>
<evidence type="ECO:0000250" key="2">
    <source>
        <dbReference type="UniProtKB" id="P20156"/>
    </source>
</evidence>
<evidence type="ECO:0000250" key="3">
    <source>
        <dbReference type="UniProtKB" id="Q0VGU4"/>
    </source>
</evidence>
<evidence type="ECO:0000255" key="4"/>
<evidence type="ECO:0000256" key="5">
    <source>
        <dbReference type="SAM" id="MobiDB-lite"/>
    </source>
</evidence>
<evidence type="ECO:0000269" key="6">
    <source>
    </source>
</evidence>
<evidence type="ECO:0000269" key="7">
    <source>
    </source>
</evidence>
<evidence type="ECO:0000269" key="8">
    <source>
    </source>
</evidence>
<evidence type="ECO:0000269" key="9">
    <source>
    </source>
</evidence>
<evidence type="ECO:0000305" key="10"/>
<evidence type="ECO:0007829" key="11">
    <source>
        <dbReference type="PDB" id="7D13"/>
    </source>
</evidence>
<evidence type="ECO:0007829" key="12">
    <source>
        <dbReference type="PDB" id="8H0G"/>
    </source>
</evidence>
<comment type="function">
    <molecule>Neurosecretory protein VGF</molecule>
    <text evidence="2 3">Secreted polyprotein that is packaged and proteolytically processed by prohormone convertases PCSK1 and PCSK2 in a cell-type-specific manner (By similarity). VGF and peptides derived from its processing play many roles in neurogenesis and neuroplasticity associated with learning, memory, depression and chronic pain (By similarity).</text>
</comment>
<comment type="function">
    <molecule>Neuroendocrine regulatory peptide-1</molecule>
    <text evidence="2">Plays a role in the control of body fluid homeostasis by regulating vasopressin release. Suppresses presynaptic glutamatergic neurons connected to vasopressin neurons.</text>
</comment>
<comment type="function">
    <molecule>Neuroendocrine regulatory peptide-2</molecule>
    <text evidence="2">Plays a role in the control of body fluid homeostasis by regulating vasopressin release. Activates GABAergic interneurons which are inhibitory neurons of the nervous system and thereby suppresses presynaptic glutamatergic neurons (By similarity). Also stimulates feeding behavior in an orexin-dependent manner in the hypothalamus (By similarity). Functions as a positive regulator for the activation of orexin neurons resulting in elevated gastric acid secretion and gastric emptying (By similarity).</text>
</comment>
<comment type="function">
    <molecule>VGF-derived peptide TLQP-21</molecule>
    <text evidence="2 3">Secreted multifunctional neuropeptide that binds to different cell receptors and thereby plays multiple physiological roles including modulation of energy expenditure, pain, response to stress, gastric regulation, glucose homeostasis as well as lipolysis (By similarity). Activates the G-protein-coupled receptor C3AR1 via a folding-upon-binding mechanism leading to enhanced lipolysis in adipocytes (By similarity). Interacts with C1QBP receptor in macrophages and microglia causing increased levels of intracellular calcium and hypersensitivity (By similarity).</text>
</comment>
<comment type="function">
    <molecule>VGF-derived peptide TLQP-62</molecule>
    <text evidence="3">Plays a role in the regulation of memory formation and depression-related behaviors potentially by influencing synaptic plasticity and neurogenesis. Induces acute and transient activation of the NTRK2/TRKB receptor and subsequent CREB phosphorylation (By similarity). Also induces insulin secretion in insulinoma cells by increasing intracellular calcium mobilization (By similarity).</text>
</comment>
<comment type="function">
    <molecule>Antimicrobial peptide VGF[554-577]</molecule>
    <text evidence="7">Has bactericidal activity against M.luteus, and antifungal activity against P. Pastoris.</text>
</comment>
<comment type="subunit">
    <molecule>VGF-derived peptide TLQP-21</molecule>
    <text evidence="2 3 9">Interacts with HSPA8 on cell membrane (PubMed:28934328). Interacts with C3AR1 (By similarity). Interacts with C1QBP (By similarity).</text>
</comment>
<comment type="subcellular location">
    <molecule>Neurosecretory protein VGF</molecule>
    <subcellularLocation>
        <location evidence="6">Secreted</location>
    </subcellularLocation>
    <subcellularLocation>
        <location evidence="6">Cytoplasmic vesicle</location>
        <location evidence="6">Secretory vesicle</location>
    </subcellularLocation>
    <text>Stored in secretory vesicles and then secreted, NERP peptides colocalize with vasopressin in the storage granules of hypothalamus.</text>
</comment>
<comment type="tissue specificity">
    <text evidence="6">Central and peripheral nervous systems, synthesized exclusively in neuronal and neuroendocrine cells.</text>
</comment>
<comment type="PTM">
    <text evidence="1">Multiple peptides are derived from VGF, with activities in synaptic plasticity, antidepression, penile erection, autonomic activation, and increases in energy expenditure.</text>
</comment>
<reference key="1">
    <citation type="journal article" date="1997" name="Genomics">
        <title>Cloning, structural organization analysis and chromosomal assignment of the human gene for neurosecretory protein VGF.</title>
        <authorList>
            <person name="Canu N."/>
            <person name="Possenti R."/>
            <person name="Ricco A.S."/>
            <person name="Rocchi M."/>
            <person name="Levi A."/>
        </authorList>
    </citation>
    <scope>NUCLEOTIDE SEQUENCE [GENOMIC DNA]</scope>
    <source>
        <tissue>Placenta</tissue>
    </source>
</reference>
<reference key="2">
    <citation type="journal article" date="2003" name="Nature">
        <title>The DNA sequence of human chromosome 7.</title>
        <authorList>
            <person name="Hillier L.W."/>
            <person name="Fulton R.S."/>
            <person name="Fulton L.A."/>
            <person name="Graves T.A."/>
            <person name="Pepin K.H."/>
            <person name="Wagner-McPherson C."/>
            <person name="Layman D."/>
            <person name="Maas J."/>
            <person name="Jaeger S."/>
            <person name="Walker R."/>
            <person name="Wylie K."/>
            <person name="Sekhon M."/>
            <person name="Becker M.C."/>
            <person name="O'Laughlin M.D."/>
            <person name="Schaller M.E."/>
            <person name="Fewell G.A."/>
            <person name="Delehaunty K.D."/>
            <person name="Miner T.L."/>
            <person name="Nash W.E."/>
            <person name="Cordes M."/>
            <person name="Du H."/>
            <person name="Sun H."/>
            <person name="Edwards J."/>
            <person name="Bradshaw-Cordum H."/>
            <person name="Ali J."/>
            <person name="Andrews S."/>
            <person name="Isak A."/>
            <person name="Vanbrunt A."/>
            <person name="Nguyen C."/>
            <person name="Du F."/>
            <person name="Lamar B."/>
            <person name="Courtney L."/>
            <person name="Kalicki J."/>
            <person name="Ozersky P."/>
            <person name="Bielicki L."/>
            <person name="Scott K."/>
            <person name="Holmes A."/>
            <person name="Harkins R."/>
            <person name="Harris A."/>
            <person name="Strong C.M."/>
            <person name="Hou S."/>
            <person name="Tomlinson C."/>
            <person name="Dauphin-Kohlberg S."/>
            <person name="Kozlowicz-Reilly A."/>
            <person name="Leonard S."/>
            <person name="Rohlfing T."/>
            <person name="Rock S.M."/>
            <person name="Tin-Wollam A.-M."/>
            <person name="Abbott A."/>
            <person name="Minx P."/>
            <person name="Maupin R."/>
            <person name="Strowmatt C."/>
            <person name="Latreille P."/>
            <person name="Miller N."/>
            <person name="Johnson D."/>
            <person name="Murray J."/>
            <person name="Woessner J.P."/>
            <person name="Wendl M.C."/>
            <person name="Yang S.-P."/>
            <person name="Schultz B.R."/>
            <person name="Wallis J.W."/>
            <person name="Spieth J."/>
            <person name="Bieri T.A."/>
            <person name="Nelson J.O."/>
            <person name="Berkowicz N."/>
            <person name="Wohldmann P.E."/>
            <person name="Cook L.L."/>
            <person name="Hickenbotham M.T."/>
            <person name="Eldred J."/>
            <person name="Williams D."/>
            <person name="Bedell J.A."/>
            <person name="Mardis E.R."/>
            <person name="Clifton S.W."/>
            <person name="Chissoe S.L."/>
            <person name="Marra M.A."/>
            <person name="Raymond C."/>
            <person name="Haugen E."/>
            <person name="Gillett W."/>
            <person name="Zhou Y."/>
            <person name="James R."/>
            <person name="Phelps K."/>
            <person name="Iadanoto S."/>
            <person name="Bubb K."/>
            <person name="Simms E."/>
            <person name="Levy R."/>
            <person name="Clendenning J."/>
            <person name="Kaul R."/>
            <person name="Kent W.J."/>
            <person name="Furey T.S."/>
            <person name="Baertsch R.A."/>
            <person name="Brent M.R."/>
            <person name="Keibler E."/>
            <person name="Flicek P."/>
            <person name="Bork P."/>
            <person name="Suyama M."/>
            <person name="Bailey J.A."/>
            <person name="Portnoy M.E."/>
            <person name="Torrents D."/>
            <person name="Chinwalla A.T."/>
            <person name="Gish W.R."/>
            <person name="Eddy S.R."/>
            <person name="McPherson J.D."/>
            <person name="Olson M.V."/>
            <person name="Eichler E.E."/>
            <person name="Green E.D."/>
            <person name="Waterston R.H."/>
            <person name="Wilson R.K."/>
        </authorList>
    </citation>
    <scope>NUCLEOTIDE SEQUENCE [LARGE SCALE GENOMIC DNA]</scope>
</reference>
<reference key="3">
    <citation type="submission" date="2005-07" db="EMBL/GenBank/DDBJ databases">
        <authorList>
            <person name="Mural R.J."/>
            <person name="Istrail S."/>
            <person name="Sutton G.G."/>
            <person name="Florea L."/>
            <person name="Halpern A.L."/>
            <person name="Mobarry C.M."/>
            <person name="Lippert R."/>
            <person name="Walenz B."/>
            <person name="Shatkay H."/>
            <person name="Dew I."/>
            <person name="Miller J.R."/>
            <person name="Flanigan M.J."/>
            <person name="Edwards N.J."/>
            <person name="Bolanos R."/>
            <person name="Fasulo D."/>
            <person name="Halldorsson B.V."/>
            <person name="Hannenhalli S."/>
            <person name="Turner R."/>
            <person name="Yooseph S."/>
            <person name="Lu F."/>
            <person name="Nusskern D.R."/>
            <person name="Shue B.C."/>
            <person name="Zheng X.H."/>
            <person name="Zhong F."/>
            <person name="Delcher A.L."/>
            <person name="Huson D.H."/>
            <person name="Kravitz S.A."/>
            <person name="Mouchard L."/>
            <person name="Reinert K."/>
            <person name="Remington K.A."/>
            <person name="Clark A.G."/>
            <person name="Waterman M.S."/>
            <person name="Eichler E.E."/>
            <person name="Adams M.D."/>
            <person name="Hunkapiller M.W."/>
            <person name="Myers E.W."/>
            <person name="Venter J.C."/>
        </authorList>
    </citation>
    <scope>NUCLEOTIDE SEQUENCE [LARGE SCALE GENOMIC DNA]</scope>
</reference>
<reference key="4">
    <citation type="journal article" date="2004" name="Genome Res.">
        <title>The status, quality, and expansion of the NIH full-length cDNA project: the Mammalian Gene Collection (MGC).</title>
        <authorList>
            <consortium name="The MGC Project Team"/>
        </authorList>
    </citation>
    <scope>NUCLEOTIDE SEQUENCE [LARGE SCALE MRNA]</scope>
    <source>
        <tissue>PNS</tissue>
    </source>
</reference>
<reference key="5">
    <citation type="journal article" date="2013" name="Mol. Cell. Proteomics">
        <title>Large-scale identification of endogenous secretory peptides using electron transfer dissociation mass spectrometry.</title>
        <authorList>
            <person name="Sasaki K."/>
            <person name="Osaki T."/>
            <person name="Minamino N."/>
        </authorList>
    </citation>
    <scope>PROTEIN SEQUENCE OF 554-577</scope>
    <scope>FUNCTION</scope>
    <scope>AMIDATION AT PRO-577</scope>
</reference>
<reference key="6">
    <citation type="journal article" date="2009" name="Cell. Mol. Life Sci.">
        <title>Neuroendocrine regulatory peptide-1 and -2: novel bioactive peptides processed from VGF.</title>
        <authorList>
            <person name="Toshinai K."/>
            <person name="Nakazato M."/>
        </authorList>
    </citation>
    <scope>REVIEW ON FUNCTION</scope>
    <scope>PYROGLUTAMATE FORMATION AT GLN-310</scope>
    <scope>SUBCELLULAR LOCATION</scope>
    <scope>TISSUE SPECIFICITY</scope>
</reference>
<reference key="7">
    <citation type="journal article" date="2015" name="Cell">
        <title>A single kinase generates the majority of the secreted phosphoproteome.</title>
        <authorList>
            <person name="Tagliabracci V.S."/>
            <person name="Wiley S.E."/>
            <person name="Guo X."/>
            <person name="Kinch L.N."/>
            <person name="Durrant E."/>
            <person name="Wen J."/>
            <person name="Xiao J."/>
            <person name="Cui J."/>
            <person name="Nguyen K.B."/>
            <person name="Engel J.L."/>
            <person name="Coon J.J."/>
            <person name="Grishin N."/>
            <person name="Pinna L.A."/>
            <person name="Pagliarini D.J."/>
            <person name="Dixon J.E."/>
        </authorList>
    </citation>
    <scope>PHOSPHORYLATION AT SER-420 AND THR-424</scope>
</reference>
<reference key="8">
    <citation type="journal article" date="2017" name="PLoS ONE">
        <title>The human VGF-derived bioactive peptide TLQP-21 binds heat shock 71 kDa protein 8 (HSPA8)on the surface of SH-SY5Y cells.</title>
        <authorList>
            <person name="Akhter S."/>
            <person name="Chakraborty S."/>
            <person name="Moutinho D."/>
            <person name="Alvarez-Coiradas E."/>
            <person name="Rosa I."/>
            <person name="Vinuela J."/>
            <person name="Dominguez E."/>
            <person name="Garcia A."/>
            <person name="Requena J.R."/>
        </authorList>
    </citation>
    <scope>INTERACTION WITH HSPA8 (VGF-DERIVED PEPTIDE TLQP-21)</scope>
</reference>
<organism>
    <name type="scientific">Homo sapiens</name>
    <name type="common">Human</name>
    <dbReference type="NCBI Taxonomy" id="9606"/>
    <lineage>
        <taxon>Eukaryota</taxon>
        <taxon>Metazoa</taxon>
        <taxon>Chordata</taxon>
        <taxon>Craniata</taxon>
        <taxon>Vertebrata</taxon>
        <taxon>Euteleostomi</taxon>
        <taxon>Mammalia</taxon>
        <taxon>Eutheria</taxon>
        <taxon>Euarchontoglires</taxon>
        <taxon>Primates</taxon>
        <taxon>Haplorrhini</taxon>
        <taxon>Catarrhini</taxon>
        <taxon>Hominidae</taxon>
        <taxon>Homo</taxon>
    </lineage>
</organism>
<protein>
    <recommendedName>
        <fullName>Neurosecretory protein VGF</fullName>
    </recommendedName>
    <component>
        <recommendedName>
            <fullName>Neuroendocrine regulatory peptide-1</fullName>
            <shortName>NERP-1</shortName>
        </recommendedName>
    </component>
    <component>
        <recommendedName>
            <fullName>Neuroendocrine regulatory peptide-2</fullName>
            <shortName>NERP-2</shortName>
        </recommendedName>
    </component>
    <component>
        <recommendedName>
            <fullName>VGF-derived peptide TLQP-21</fullName>
        </recommendedName>
    </component>
    <component>
        <recommendedName>
            <fullName>VGF-derived peptide TLQP-62</fullName>
        </recommendedName>
    </component>
    <component>
        <recommendedName>
            <fullName>Antimicrobial peptide VGF[554-577]</fullName>
        </recommendedName>
    </component>
</protein>
<sequence>MKALRLSASALFCLLLINGLGAAPPGRPEAQPPPLSSEHKEPVAGDAVPGPKDGSAPEVRGARNSEPQDEGELFQGVDPRALAAVLLQALDRPASPPAPSGSQQGPEEEAAEALLTETVRSQTHSLPAPESPEPAAPPRPQTPENGPEASDPSEELEALASLLQELRDFSPSSAKRQQETAAAETETRTHTLTRVNLESPGPERVWRASWGEFQARVPERAPLPPPAPSQFQARMPDSGPLPETHKFGEGVSSPKTHLGEALAPLSKAYQGVAAPFPKARRPESALLGGSEAGERLLQQGLAQVEAGRRQAEATRQAAAQEERLADLASDLLLQYLLQGGARQRGLGGRGLQEAAEERESAREEEEAEQERRGGEERVGEEDEEAAEAEAEAEEAERARQNALLFAEEEDGEAGAEDKRSQEETPGHRRKEAEGTEEGGEEEDDEEMDPQTIDSLIELSTKLHLPADDVVSIIEEVEEKRKRKKNAPPEPVPPPRAAPAPTHVRSPQPPPPAPAPARDELPDWNEVLPPWDREEDEVYPPGPYHPFPNYIRPRTLQPPSALRRRHYHHALPPSRHYPGREAQARRAQEEAEAEERRLQEQEELENYIEHVLLRRP</sequence>
<proteinExistence type="evidence at protein level"/>
<dbReference type="EMBL" id="Y12661">
    <property type="protein sequence ID" value="CAA73210.1"/>
    <property type="molecule type" value="Genomic_DNA"/>
</dbReference>
<dbReference type="EMBL" id="AC004876">
    <property type="protein sequence ID" value="AAD45830.1"/>
    <property type="molecule type" value="Genomic_DNA"/>
</dbReference>
<dbReference type="EMBL" id="CH471197">
    <property type="protein sequence ID" value="EAW50201.1"/>
    <property type="molecule type" value="Genomic_DNA"/>
</dbReference>
<dbReference type="EMBL" id="BC063835">
    <property type="protein sequence ID" value="AAH63835.1"/>
    <property type="molecule type" value="mRNA"/>
</dbReference>
<dbReference type="CCDS" id="CCDS5712.1"/>
<dbReference type="RefSeq" id="NP_003369.2">
    <property type="nucleotide sequence ID" value="NM_003378.3"/>
</dbReference>
<dbReference type="RefSeq" id="XP_005250618.1">
    <property type="nucleotide sequence ID" value="XM_005250561.6"/>
</dbReference>
<dbReference type="RefSeq" id="XP_011514851.1">
    <property type="nucleotide sequence ID" value="XM_011516549.4"/>
</dbReference>
<dbReference type="RefSeq" id="XP_016868068.1">
    <property type="nucleotide sequence ID" value="XM_017012579.1"/>
</dbReference>
<dbReference type="RefSeq" id="XP_054214910.1">
    <property type="nucleotide sequence ID" value="XM_054358935.1"/>
</dbReference>
<dbReference type="RefSeq" id="XP_054214911.1">
    <property type="nucleotide sequence ID" value="XM_054358936.1"/>
</dbReference>
<dbReference type="RefSeq" id="XP_054214912.1">
    <property type="nucleotide sequence ID" value="XM_054358937.1"/>
</dbReference>
<dbReference type="PDB" id="7D13">
    <property type="method" value="NMR"/>
    <property type="chains" value="A=310-347"/>
</dbReference>
<dbReference type="PDB" id="7D16">
    <property type="method" value="NMR"/>
    <property type="chains" value="A=310-347"/>
</dbReference>
<dbReference type="PDB" id="8H0G">
    <property type="method" value="NMR"/>
    <property type="chains" value="A=586-615"/>
</dbReference>
<dbReference type="PDB" id="8H0U">
    <property type="method" value="NMR"/>
    <property type="chains" value="A=586-615"/>
</dbReference>
<dbReference type="PDBsum" id="7D13"/>
<dbReference type="PDBsum" id="7D16"/>
<dbReference type="PDBsum" id="8H0G"/>
<dbReference type="PDBsum" id="8H0U"/>
<dbReference type="SMR" id="O15240"/>
<dbReference type="BioGRID" id="113268">
    <property type="interactions" value="33"/>
</dbReference>
<dbReference type="FunCoup" id="O15240">
    <property type="interactions" value="492"/>
</dbReference>
<dbReference type="IntAct" id="O15240">
    <property type="interactions" value="27"/>
</dbReference>
<dbReference type="MINT" id="O15240"/>
<dbReference type="STRING" id="9606.ENSP00000249330"/>
<dbReference type="GlyCosmos" id="O15240">
    <property type="glycosylation" value="1 site, 1 glycan"/>
</dbReference>
<dbReference type="GlyGen" id="O15240">
    <property type="glycosylation" value="11 sites, 2 O-linked glycans (11 sites)"/>
</dbReference>
<dbReference type="iPTMnet" id="O15240"/>
<dbReference type="PhosphoSitePlus" id="O15240"/>
<dbReference type="BioMuta" id="VGF"/>
<dbReference type="jPOST" id="O15240"/>
<dbReference type="MassIVE" id="O15240"/>
<dbReference type="PaxDb" id="9606-ENSP00000249330"/>
<dbReference type="PeptideAtlas" id="O15240"/>
<dbReference type="ProteomicsDB" id="48531"/>
<dbReference type="Antibodypedia" id="30974">
    <property type="antibodies" value="349 antibodies from 35 providers"/>
</dbReference>
<dbReference type="DNASU" id="7425"/>
<dbReference type="Ensembl" id="ENST00000249330.3">
    <property type="protein sequence ID" value="ENSP00000249330.2"/>
    <property type="gene ID" value="ENSG00000128564.8"/>
</dbReference>
<dbReference type="Ensembl" id="ENST00000445482.2">
    <property type="protein sequence ID" value="ENSP00000400884.2"/>
    <property type="gene ID" value="ENSG00000128564.8"/>
</dbReference>
<dbReference type="GeneID" id="7425"/>
<dbReference type="KEGG" id="hsa:7425"/>
<dbReference type="MANE-Select" id="ENST00000249330.3">
    <property type="protein sequence ID" value="ENSP00000249330.2"/>
    <property type="RefSeq nucleotide sequence ID" value="NM_003378.4"/>
    <property type="RefSeq protein sequence ID" value="NP_003369.2"/>
</dbReference>
<dbReference type="UCSC" id="uc003uxx.5">
    <property type="organism name" value="human"/>
</dbReference>
<dbReference type="AGR" id="HGNC:12684"/>
<dbReference type="CTD" id="7425"/>
<dbReference type="DisGeNET" id="7425"/>
<dbReference type="GeneCards" id="VGF"/>
<dbReference type="HGNC" id="HGNC:12684">
    <property type="gene designation" value="VGF"/>
</dbReference>
<dbReference type="HPA" id="ENSG00000128564">
    <property type="expression patterns" value="Group enriched (brain, pituitary gland)"/>
</dbReference>
<dbReference type="MIM" id="602186">
    <property type="type" value="gene"/>
</dbReference>
<dbReference type="neXtProt" id="NX_O15240"/>
<dbReference type="OpenTargets" id="ENSG00000128564"/>
<dbReference type="PharmGKB" id="PA37305"/>
<dbReference type="VEuPathDB" id="HostDB:ENSG00000128564"/>
<dbReference type="eggNOG" id="ENOG502S5N4">
    <property type="taxonomic scope" value="Eukaryota"/>
</dbReference>
<dbReference type="GeneTree" id="ENSGT00390000017745"/>
<dbReference type="HOGENOM" id="CLU_030654_0_0_1"/>
<dbReference type="InParanoid" id="O15240"/>
<dbReference type="OMA" id="EMPGHRR"/>
<dbReference type="OrthoDB" id="8926660at2759"/>
<dbReference type="PAN-GO" id="O15240">
    <property type="GO annotations" value="4 GO annotations based on evolutionary models"/>
</dbReference>
<dbReference type="PhylomeDB" id="O15240"/>
<dbReference type="TreeFam" id="TF338498"/>
<dbReference type="PathwayCommons" id="O15240"/>
<dbReference type="Reactome" id="R-HSA-381426">
    <property type="pathway name" value="Regulation of Insulin-like Growth Factor (IGF) transport and uptake by Insulin-like Growth Factor Binding Proteins (IGFBPs)"/>
</dbReference>
<dbReference type="Reactome" id="R-HSA-8957275">
    <property type="pathway name" value="Post-translational protein phosphorylation"/>
</dbReference>
<dbReference type="Reactome" id="R-HSA-9031628">
    <property type="pathway name" value="NGF-stimulated transcription"/>
</dbReference>
<dbReference type="SignaLink" id="O15240"/>
<dbReference type="BioGRID-ORCS" id="7425">
    <property type="hits" value="12 hits in 1146 CRISPR screens"/>
</dbReference>
<dbReference type="CD-CODE" id="FB4E32DD">
    <property type="entry name" value="Presynaptic clusters and postsynaptic densities"/>
</dbReference>
<dbReference type="GenomeRNAi" id="7425"/>
<dbReference type="Pharos" id="O15240">
    <property type="development level" value="Tbio"/>
</dbReference>
<dbReference type="PRO" id="PR:O15240"/>
<dbReference type="Proteomes" id="UP000005640">
    <property type="component" value="Chromosome 7"/>
</dbReference>
<dbReference type="RNAct" id="O15240">
    <property type="molecule type" value="protein"/>
</dbReference>
<dbReference type="Bgee" id="ENSG00000128564">
    <property type="expression patterns" value="Expressed in superior frontal gyrus and 78 other cell types or tissues"/>
</dbReference>
<dbReference type="ExpressionAtlas" id="O15240">
    <property type="expression patterns" value="baseline and differential"/>
</dbReference>
<dbReference type="GO" id="GO:0031410">
    <property type="term" value="C:cytoplasmic vesicle"/>
    <property type="evidence" value="ECO:0000314"/>
    <property type="project" value="UniProtKB"/>
</dbReference>
<dbReference type="GO" id="GO:0005788">
    <property type="term" value="C:endoplasmic reticulum lumen"/>
    <property type="evidence" value="ECO:0000304"/>
    <property type="project" value="Reactome"/>
</dbReference>
<dbReference type="GO" id="GO:0005615">
    <property type="term" value="C:extracellular space"/>
    <property type="evidence" value="ECO:0000314"/>
    <property type="project" value="UniProtKB"/>
</dbReference>
<dbReference type="GO" id="GO:0005794">
    <property type="term" value="C:Golgi apparatus"/>
    <property type="evidence" value="ECO:0000314"/>
    <property type="project" value="HPA"/>
</dbReference>
<dbReference type="GO" id="GO:0043231">
    <property type="term" value="C:intracellular membrane-bounded organelle"/>
    <property type="evidence" value="ECO:0000314"/>
    <property type="project" value="HPA"/>
</dbReference>
<dbReference type="GO" id="GO:0030133">
    <property type="term" value="C:transport vesicle"/>
    <property type="evidence" value="ECO:0007669"/>
    <property type="project" value="UniProtKB-SubCell"/>
</dbReference>
<dbReference type="GO" id="GO:0008083">
    <property type="term" value="F:growth factor activity"/>
    <property type="evidence" value="ECO:0007669"/>
    <property type="project" value="UniProtKB-KW"/>
</dbReference>
<dbReference type="GO" id="GO:0005179">
    <property type="term" value="F:hormone activity"/>
    <property type="evidence" value="ECO:0000318"/>
    <property type="project" value="GO_Central"/>
</dbReference>
<dbReference type="GO" id="GO:0005184">
    <property type="term" value="F:neuropeptide hormone activity"/>
    <property type="evidence" value="ECO:0007669"/>
    <property type="project" value="Ensembl"/>
</dbReference>
<dbReference type="GO" id="GO:0033500">
    <property type="term" value="P:carbohydrate homeostasis"/>
    <property type="evidence" value="ECO:0000318"/>
    <property type="project" value="GO_Central"/>
</dbReference>
<dbReference type="GO" id="GO:0042742">
    <property type="term" value="P:defense response to bacterium"/>
    <property type="evidence" value="ECO:0007669"/>
    <property type="project" value="UniProtKB-KW"/>
</dbReference>
<dbReference type="GO" id="GO:0006091">
    <property type="term" value="P:generation of precursor metabolites and energy"/>
    <property type="evidence" value="ECO:0007669"/>
    <property type="project" value="Ensembl"/>
</dbReference>
<dbReference type="GO" id="GO:0042593">
    <property type="term" value="P:glucose homeostasis"/>
    <property type="evidence" value="ECO:0007669"/>
    <property type="project" value="Ensembl"/>
</dbReference>
<dbReference type="GO" id="GO:0030073">
    <property type="term" value="P:insulin secretion"/>
    <property type="evidence" value="ECO:0007669"/>
    <property type="project" value="Ensembl"/>
</dbReference>
<dbReference type="GO" id="GO:0001541">
    <property type="term" value="P:ovarian follicle development"/>
    <property type="evidence" value="ECO:0007669"/>
    <property type="project" value="Ensembl"/>
</dbReference>
<dbReference type="GO" id="GO:0048167">
    <property type="term" value="P:regulation of synaptic plasticity"/>
    <property type="evidence" value="ECO:0000318"/>
    <property type="project" value="GO_Central"/>
</dbReference>
<dbReference type="GO" id="GO:0051591">
    <property type="term" value="P:response to cAMP"/>
    <property type="evidence" value="ECO:0000270"/>
    <property type="project" value="UniProtKB"/>
</dbReference>
<dbReference type="GO" id="GO:0009409">
    <property type="term" value="P:response to cold"/>
    <property type="evidence" value="ECO:0007669"/>
    <property type="project" value="Ensembl"/>
</dbReference>
<dbReference type="GO" id="GO:0002021">
    <property type="term" value="P:response to dietary excess"/>
    <property type="evidence" value="ECO:0007669"/>
    <property type="project" value="Ensembl"/>
</dbReference>
<dbReference type="GO" id="GO:0032868">
    <property type="term" value="P:response to insulin"/>
    <property type="evidence" value="ECO:0007669"/>
    <property type="project" value="Ensembl"/>
</dbReference>
<dbReference type="GO" id="GO:0019953">
    <property type="term" value="P:sexual reproduction"/>
    <property type="evidence" value="ECO:0007669"/>
    <property type="project" value="Ensembl"/>
</dbReference>
<dbReference type="InterPro" id="IPR026128">
    <property type="entry name" value="VGF"/>
</dbReference>
<dbReference type="PANTHER" id="PTHR15159">
    <property type="entry name" value="NEUROSECRETORY PROTEIN VGF"/>
    <property type="match status" value="1"/>
</dbReference>
<dbReference type="PANTHER" id="PTHR15159:SF2">
    <property type="entry name" value="NEUROSECRETORY PROTEIN VGF"/>
    <property type="match status" value="1"/>
</dbReference>
<gene>
    <name type="primary">VGF</name>
</gene>
<accession>O15240</accession>
<accession>Q9UDW8</accession>
<name>VGF_HUMAN</name>